<keyword id="KW-0012">Acyltransferase</keyword>
<keyword id="KW-0441">Lipid A biosynthesis</keyword>
<keyword id="KW-0444">Lipid biosynthesis</keyword>
<keyword id="KW-0443">Lipid metabolism</keyword>
<keyword id="KW-1185">Reference proteome</keyword>
<keyword id="KW-0677">Repeat</keyword>
<keyword id="KW-0808">Transferase</keyword>
<feature type="chain" id="PRO_0000264362" description="UDP-3-O-acylglucosamine N-acyltransferase">
    <location>
        <begin position="1"/>
        <end position="349"/>
    </location>
</feature>
<feature type="active site" description="Proton acceptor" evidence="1">
    <location>
        <position position="242"/>
    </location>
</feature>
<evidence type="ECO:0000255" key="1">
    <source>
        <dbReference type="HAMAP-Rule" id="MF_00523"/>
    </source>
</evidence>
<reference key="1">
    <citation type="journal article" date="2007" name="Appl. Environ. Microbiol.">
        <title>Genome sequence of the cellulolytic gliding bacterium Cytophaga hutchinsonii.</title>
        <authorList>
            <person name="Xie G."/>
            <person name="Bruce D.C."/>
            <person name="Challacombe J.F."/>
            <person name="Chertkov O."/>
            <person name="Detter J.C."/>
            <person name="Gilna P."/>
            <person name="Han C.S."/>
            <person name="Lucas S."/>
            <person name="Misra M."/>
            <person name="Myers G.L."/>
            <person name="Richardson P."/>
            <person name="Tapia R."/>
            <person name="Thayer N."/>
            <person name="Thompson L.S."/>
            <person name="Brettin T.S."/>
            <person name="Henrissat B."/>
            <person name="Wilson D.B."/>
            <person name="McBride M.J."/>
        </authorList>
    </citation>
    <scope>NUCLEOTIDE SEQUENCE [LARGE SCALE GENOMIC DNA]</scope>
    <source>
        <strain>ATCC 33406 / DSM 1761 / JCM 20678 / CIP 103989 / IAM 12607 / NBRC 15051 / NCIMB 9469 / D465</strain>
    </source>
</reference>
<sequence length="349" mass="37062">MEFTLEEIAHLLGGEVKGDGKAKVSSIAKIEEASSGSISFLSNPKYESFIYSTNASAVIVKKDFQPRESLKTSLILVDDPYTSFTTILEAYQQALNASKMGKEEPSFIGKNAVIGSNHYIGAFAYIGSNCKIGNNVKIYPQAYIGDNVTIGDNTTIYAGVKIYANCELGNQVTIHSGCVIGSDGFGFAPQADGTYKTIPQIGNVVIGNHVDIGANTVIDCATMGSTIIYDGVKIDNLIQIAHNVKIGKNTVIAAQAGISGSTTIGENCIIAGQVGIIGHIKIANKTTIAAQAGIGRTISEEGLTLLGSPAIEKLDFLKSFAIYRKLPTLQKRIEELEEKTLNLSGIKES</sequence>
<comment type="function">
    <text evidence="1">Catalyzes the N-acylation of UDP-3-O-acylglucosamine using 3-hydroxyacyl-ACP as the acyl donor. Is involved in the biosynthesis of lipid A, a phosphorylated glycolipid that anchors the lipopolysaccharide to the outer membrane of the cell.</text>
</comment>
<comment type="catalytic activity">
    <reaction evidence="1">
        <text>a UDP-3-O-[(3R)-3-hydroxyacyl]-alpha-D-glucosamine + a (3R)-hydroxyacyl-[ACP] = a UDP-2-N,3-O-bis[(3R)-3-hydroxyacyl]-alpha-D-glucosamine + holo-[ACP] + H(+)</text>
        <dbReference type="Rhea" id="RHEA:53836"/>
        <dbReference type="Rhea" id="RHEA-COMP:9685"/>
        <dbReference type="Rhea" id="RHEA-COMP:9945"/>
        <dbReference type="ChEBI" id="CHEBI:15378"/>
        <dbReference type="ChEBI" id="CHEBI:64479"/>
        <dbReference type="ChEBI" id="CHEBI:78827"/>
        <dbReference type="ChEBI" id="CHEBI:137740"/>
        <dbReference type="ChEBI" id="CHEBI:137748"/>
        <dbReference type="EC" id="2.3.1.191"/>
    </reaction>
</comment>
<comment type="pathway">
    <text evidence="1">Bacterial outer membrane biogenesis; LPS lipid A biosynthesis.</text>
</comment>
<comment type="subunit">
    <text evidence="1">Homotrimer.</text>
</comment>
<comment type="similarity">
    <text evidence="1">Belongs to the transferase hexapeptide repeat family. LpxD subfamily.</text>
</comment>
<gene>
    <name evidence="1" type="primary">lpxD</name>
    <name type="ordered locus">CHU_1038</name>
</gene>
<accession>Q11WA1</accession>
<organism>
    <name type="scientific">Cytophaga hutchinsonii (strain ATCC 33406 / DSM 1761 / CIP 103989 / NBRC 15051 / NCIMB 9469 / D465)</name>
    <dbReference type="NCBI Taxonomy" id="269798"/>
    <lineage>
        <taxon>Bacteria</taxon>
        <taxon>Pseudomonadati</taxon>
        <taxon>Bacteroidota</taxon>
        <taxon>Cytophagia</taxon>
        <taxon>Cytophagales</taxon>
        <taxon>Cytophagaceae</taxon>
        <taxon>Cytophaga</taxon>
    </lineage>
</organism>
<name>LPXD_CYTH3</name>
<dbReference type="EC" id="2.3.1.191" evidence="1"/>
<dbReference type="EMBL" id="CP000383">
    <property type="protein sequence ID" value="ABG58315.1"/>
    <property type="molecule type" value="Genomic_DNA"/>
</dbReference>
<dbReference type="RefSeq" id="WP_011584430.1">
    <property type="nucleotide sequence ID" value="NC_008255.1"/>
</dbReference>
<dbReference type="SMR" id="Q11WA1"/>
<dbReference type="STRING" id="269798.CHU_1038"/>
<dbReference type="KEGG" id="chu:CHU_1038"/>
<dbReference type="eggNOG" id="COG1044">
    <property type="taxonomic scope" value="Bacteria"/>
</dbReference>
<dbReference type="HOGENOM" id="CLU_049865_0_0_10"/>
<dbReference type="OrthoDB" id="9784739at2"/>
<dbReference type="UniPathway" id="UPA00973"/>
<dbReference type="Proteomes" id="UP000001822">
    <property type="component" value="Chromosome"/>
</dbReference>
<dbReference type="GO" id="GO:0016020">
    <property type="term" value="C:membrane"/>
    <property type="evidence" value="ECO:0007669"/>
    <property type="project" value="GOC"/>
</dbReference>
<dbReference type="GO" id="GO:0016410">
    <property type="term" value="F:N-acyltransferase activity"/>
    <property type="evidence" value="ECO:0007669"/>
    <property type="project" value="InterPro"/>
</dbReference>
<dbReference type="GO" id="GO:0009245">
    <property type="term" value="P:lipid A biosynthetic process"/>
    <property type="evidence" value="ECO:0007669"/>
    <property type="project" value="UniProtKB-UniRule"/>
</dbReference>
<dbReference type="CDD" id="cd03352">
    <property type="entry name" value="LbH_LpxD"/>
    <property type="match status" value="1"/>
</dbReference>
<dbReference type="Gene3D" id="2.160.10.10">
    <property type="entry name" value="Hexapeptide repeat proteins"/>
    <property type="match status" value="1"/>
</dbReference>
<dbReference type="Gene3D" id="3.40.1390.10">
    <property type="entry name" value="MurE/MurF, N-terminal domain"/>
    <property type="match status" value="1"/>
</dbReference>
<dbReference type="HAMAP" id="MF_00523">
    <property type="entry name" value="LpxD"/>
    <property type="match status" value="1"/>
</dbReference>
<dbReference type="InterPro" id="IPR001451">
    <property type="entry name" value="Hexapep"/>
</dbReference>
<dbReference type="InterPro" id="IPR018357">
    <property type="entry name" value="Hexapep_transf_CS"/>
</dbReference>
<dbReference type="InterPro" id="IPR007691">
    <property type="entry name" value="LpxD"/>
</dbReference>
<dbReference type="InterPro" id="IPR011004">
    <property type="entry name" value="Trimer_LpxA-like_sf"/>
</dbReference>
<dbReference type="InterPro" id="IPR020573">
    <property type="entry name" value="UDP_GlcNAc_AcTrfase_non-rep"/>
</dbReference>
<dbReference type="NCBIfam" id="TIGR01853">
    <property type="entry name" value="lipid_A_lpxD"/>
    <property type="match status" value="1"/>
</dbReference>
<dbReference type="NCBIfam" id="NF002060">
    <property type="entry name" value="PRK00892.1"/>
    <property type="match status" value="1"/>
</dbReference>
<dbReference type="PANTHER" id="PTHR43378">
    <property type="entry name" value="UDP-3-O-ACYLGLUCOSAMINE N-ACYLTRANSFERASE"/>
    <property type="match status" value="1"/>
</dbReference>
<dbReference type="PANTHER" id="PTHR43378:SF2">
    <property type="entry name" value="UDP-3-O-ACYLGLUCOSAMINE N-ACYLTRANSFERASE 1, MITOCHONDRIAL-RELATED"/>
    <property type="match status" value="1"/>
</dbReference>
<dbReference type="Pfam" id="PF00132">
    <property type="entry name" value="Hexapep"/>
    <property type="match status" value="2"/>
</dbReference>
<dbReference type="Pfam" id="PF04613">
    <property type="entry name" value="LpxD"/>
    <property type="match status" value="1"/>
</dbReference>
<dbReference type="SUPFAM" id="SSF51161">
    <property type="entry name" value="Trimeric LpxA-like enzymes"/>
    <property type="match status" value="1"/>
</dbReference>
<dbReference type="PROSITE" id="PS00101">
    <property type="entry name" value="HEXAPEP_TRANSFERASES"/>
    <property type="match status" value="2"/>
</dbReference>
<protein>
    <recommendedName>
        <fullName evidence="1">UDP-3-O-acylglucosamine N-acyltransferase</fullName>
        <ecNumber evidence="1">2.3.1.191</ecNumber>
    </recommendedName>
</protein>
<proteinExistence type="inferred from homology"/>